<evidence type="ECO:0000255" key="1">
    <source>
        <dbReference type="HAMAP-Rule" id="MF_01807"/>
    </source>
</evidence>
<evidence type="ECO:0000255" key="2">
    <source>
        <dbReference type="PROSITE-ProRule" id="PRU01246"/>
    </source>
</evidence>
<evidence type="ECO:0000255" key="3">
    <source>
        <dbReference type="PROSITE-ProRule" id="PRU01248"/>
    </source>
</evidence>
<dbReference type="EMBL" id="AL596170">
    <property type="protein sequence ID" value="CAC97299.1"/>
    <property type="molecule type" value="Genomic_DNA"/>
</dbReference>
<dbReference type="PIR" id="AC1691">
    <property type="entry name" value="AC1691"/>
</dbReference>
<dbReference type="RefSeq" id="WP_003763158.1">
    <property type="nucleotide sequence ID" value="NC_003212.1"/>
</dbReference>
<dbReference type="SMR" id="Q92A53"/>
<dbReference type="STRING" id="272626.gene:17566427"/>
<dbReference type="GeneID" id="93235408"/>
<dbReference type="KEGG" id="lin:lin2069"/>
<dbReference type="eggNOG" id="COG4974">
    <property type="taxonomic scope" value="Bacteria"/>
</dbReference>
<dbReference type="HOGENOM" id="CLU_027562_9_6_9"/>
<dbReference type="OrthoDB" id="9801717at2"/>
<dbReference type="Proteomes" id="UP000002513">
    <property type="component" value="Chromosome"/>
</dbReference>
<dbReference type="GO" id="GO:0005737">
    <property type="term" value="C:cytoplasm"/>
    <property type="evidence" value="ECO:0007669"/>
    <property type="project" value="UniProtKB-SubCell"/>
</dbReference>
<dbReference type="GO" id="GO:0003677">
    <property type="term" value="F:DNA binding"/>
    <property type="evidence" value="ECO:0007669"/>
    <property type="project" value="UniProtKB-KW"/>
</dbReference>
<dbReference type="GO" id="GO:0009037">
    <property type="term" value="F:tyrosine-based site-specific recombinase activity"/>
    <property type="evidence" value="ECO:0007669"/>
    <property type="project" value="UniProtKB-UniRule"/>
</dbReference>
<dbReference type="GO" id="GO:0051301">
    <property type="term" value="P:cell division"/>
    <property type="evidence" value="ECO:0007669"/>
    <property type="project" value="UniProtKB-KW"/>
</dbReference>
<dbReference type="GO" id="GO:0007059">
    <property type="term" value="P:chromosome segregation"/>
    <property type="evidence" value="ECO:0007669"/>
    <property type="project" value="UniProtKB-UniRule"/>
</dbReference>
<dbReference type="GO" id="GO:0006313">
    <property type="term" value="P:DNA transposition"/>
    <property type="evidence" value="ECO:0007669"/>
    <property type="project" value="UniProtKB-UniRule"/>
</dbReference>
<dbReference type="CDD" id="cd00798">
    <property type="entry name" value="INT_XerDC_C"/>
    <property type="match status" value="1"/>
</dbReference>
<dbReference type="Gene3D" id="1.10.150.130">
    <property type="match status" value="1"/>
</dbReference>
<dbReference type="Gene3D" id="1.10.443.10">
    <property type="entry name" value="Intergrase catalytic core"/>
    <property type="match status" value="1"/>
</dbReference>
<dbReference type="HAMAP" id="MF_01808">
    <property type="entry name" value="Recomb_XerC_XerD"/>
    <property type="match status" value="1"/>
</dbReference>
<dbReference type="HAMAP" id="MF_01807">
    <property type="entry name" value="Recomb_XerD"/>
    <property type="match status" value="1"/>
</dbReference>
<dbReference type="InterPro" id="IPR044068">
    <property type="entry name" value="CB"/>
</dbReference>
<dbReference type="InterPro" id="IPR011010">
    <property type="entry name" value="DNA_brk_join_enz"/>
</dbReference>
<dbReference type="InterPro" id="IPR013762">
    <property type="entry name" value="Integrase-like_cat_sf"/>
</dbReference>
<dbReference type="InterPro" id="IPR002104">
    <property type="entry name" value="Integrase_catalytic"/>
</dbReference>
<dbReference type="InterPro" id="IPR010998">
    <property type="entry name" value="Integrase_recombinase_N"/>
</dbReference>
<dbReference type="InterPro" id="IPR004107">
    <property type="entry name" value="Integrase_SAM-like_N"/>
</dbReference>
<dbReference type="InterPro" id="IPR011932">
    <property type="entry name" value="Recomb_XerD"/>
</dbReference>
<dbReference type="InterPro" id="IPR023009">
    <property type="entry name" value="Tyrosine_recombinase_XerC/XerD"/>
</dbReference>
<dbReference type="InterPro" id="IPR050090">
    <property type="entry name" value="Tyrosine_recombinase_XerCD"/>
</dbReference>
<dbReference type="NCBIfam" id="NF001399">
    <property type="entry name" value="PRK00283.1"/>
    <property type="match status" value="1"/>
</dbReference>
<dbReference type="NCBIfam" id="NF040815">
    <property type="entry name" value="recomb_XerA_Arch"/>
    <property type="match status" value="1"/>
</dbReference>
<dbReference type="NCBIfam" id="TIGR02225">
    <property type="entry name" value="recomb_XerD"/>
    <property type="match status" value="1"/>
</dbReference>
<dbReference type="PANTHER" id="PTHR30349">
    <property type="entry name" value="PHAGE INTEGRASE-RELATED"/>
    <property type="match status" value="1"/>
</dbReference>
<dbReference type="PANTHER" id="PTHR30349:SF81">
    <property type="entry name" value="TYROSINE RECOMBINASE XERC"/>
    <property type="match status" value="1"/>
</dbReference>
<dbReference type="Pfam" id="PF02899">
    <property type="entry name" value="Phage_int_SAM_1"/>
    <property type="match status" value="1"/>
</dbReference>
<dbReference type="Pfam" id="PF00589">
    <property type="entry name" value="Phage_integrase"/>
    <property type="match status" value="1"/>
</dbReference>
<dbReference type="SUPFAM" id="SSF56349">
    <property type="entry name" value="DNA breaking-rejoining enzymes"/>
    <property type="match status" value="1"/>
</dbReference>
<dbReference type="PROSITE" id="PS51900">
    <property type="entry name" value="CB"/>
    <property type="match status" value="1"/>
</dbReference>
<dbReference type="PROSITE" id="PS51898">
    <property type="entry name" value="TYR_RECOMBINASE"/>
    <property type="match status" value="1"/>
</dbReference>
<protein>
    <recommendedName>
        <fullName evidence="1">Tyrosine recombinase XerD</fullName>
    </recommendedName>
</protein>
<gene>
    <name evidence="1" type="primary">xerD</name>
    <name type="ordered locus">lin2069</name>
</gene>
<feature type="chain" id="PRO_0000095394" description="Tyrosine recombinase XerD">
    <location>
        <begin position="1"/>
        <end position="297"/>
    </location>
</feature>
<feature type="domain" description="Core-binding (CB)" evidence="3">
    <location>
        <begin position="1"/>
        <end position="86"/>
    </location>
</feature>
<feature type="domain" description="Tyr recombinase" evidence="2">
    <location>
        <begin position="107"/>
        <end position="291"/>
    </location>
</feature>
<feature type="active site" evidence="1">
    <location>
        <position position="147"/>
    </location>
</feature>
<feature type="active site" evidence="1">
    <location>
        <position position="171"/>
    </location>
</feature>
<feature type="active site" evidence="1">
    <location>
        <position position="243"/>
    </location>
</feature>
<feature type="active site" evidence="1">
    <location>
        <position position="246"/>
    </location>
</feature>
<feature type="active site" evidence="1">
    <location>
        <position position="269"/>
    </location>
</feature>
<feature type="active site" description="O-(3'-phospho-DNA)-tyrosine intermediate" evidence="1">
    <location>
        <position position="278"/>
    </location>
</feature>
<comment type="function">
    <text evidence="1">Site-specific tyrosine recombinase, which acts by catalyzing the cutting and rejoining of the recombining DNA molecules. The XerC-XerD complex is essential to convert dimers of the bacterial chromosome into monomers to permit their segregation at cell division. It also contributes to the segregational stability of plasmids.</text>
</comment>
<comment type="subunit">
    <text evidence="1">Forms a cyclic heterotetrameric complex composed of two molecules of XerC and two molecules of XerD.</text>
</comment>
<comment type="subcellular location">
    <subcellularLocation>
        <location evidence="1">Cytoplasm</location>
    </subcellularLocation>
</comment>
<comment type="similarity">
    <text evidence="1">Belongs to the 'phage' integrase family. XerD subfamily.</text>
</comment>
<name>XERD_LISIN</name>
<sequence length="297" mass="34059">MNDLIDDFLHFLIVEKGLSANTIKAYERDLHYFVSYMDTSRTLTDPDTLERNDIVGFMAFARKEGKSPRSVARYIASLRSFFHYLMHDGKMSHDPMIQIETPKQAQSLPKVLNLDDVEKLLSSSDTSTPLGLRDQAMLEILYATGLRVTELVKLKMDDLHLQMGFIQTIGKGDKERIIPLGKTATTVLEQYLEEARPKLRRPKYRNDFVFLNHHGQGLTRQGFWKILKGIAKESGIEKPITPHTLRHSFATHLLENGADLRSVQELLGHADISTTQIYTHVTKLRLKDVYKQFHPRA</sequence>
<organism>
    <name type="scientific">Listeria innocua serovar 6a (strain ATCC BAA-680 / CLIP 11262)</name>
    <dbReference type="NCBI Taxonomy" id="272626"/>
    <lineage>
        <taxon>Bacteria</taxon>
        <taxon>Bacillati</taxon>
        <taxon>Bacillota</taxon>
        <taxon>Bacilli</taxon>
        <taxon>Bacillales</taxon>
        <taxon>Listeriaceae</taxon>
        <taxon>Listeria</taxon>
    </lineage>
</organism>
<keyword id="KW-0131">Cell cycle</keyword>
<keyword id="KW-0132">Cell division</keyword>
<keyword id="KW-0159">Chromosome partition</keyword>
<keyword id="KW-0963">Cytoplasm</keyword>
<keyword id="KW-0229">DNA integration</keyword>
<keyword id="KW-0233">DNA recombination</keyword>
<keyword id="KW-0238">DNA-binding</keyword>
<reference key="1">
    <citation type="journal article" date="2001" name="Science">
        <title>Comparative genomics of Listeria species.</title>
        <authorList>
            <person name="Glaser P."/>
            <person name="Frangeul L."/>
            <person name="Buchrieser C."/>
            <person name="Rusniok C."/>
            <person name="Amend A."/>
            <person name="Baquero F."/>
            <person name="Berche P."/>
            <person name="Bloecker H."/>
            <person name="Brandt P."/>
            <person name="Chakraborty T."/>
            <person name="Charbit A."/>
            <person name="Chetouani F."/>
            <person name="Couve E."/>
            <person name="de Daruvar A."/>
            <person name="Dehoux P."/>
            <person name="Domann E."/>
            <person name="Dominguez-Bernal G."/>
            <person name="Duchaud E."/>
            <person name="Durant L."/>
            <person name="Dussurget O."/>
            <person name="Entian K.-D."/>
            <person name="Fsihi H."/>
            <person name="Garcia-del Portillo F."/>
            <person name="Garrido P."/>
            <person name="Gautier L."/>
            <person name="Goebel W."/>
            <person name="Gomez-Lopez N."/>
            <person name="Hain T."/>
            <person name="Hauf J."/>
            <person name="Jackson D."/>
            <person name="Jones L.-M."/>
            <person name="Kaerst U."/>
            <person name="Kreft J."/>
            <person name="Kuhn M."/>
            <person name="Kunst F."/>
            <person name="Kurapkat G."/>
            <person name="Madueno E."/>
            <person name="Maitournam A."/>
            <person name="Mata Vicente J."/>
            <person name="Ng E."/>
            <person name="Nedjari H."/>
            <person name="Nordsiek G."/>
            <person name="Novella S."/>
            <person name="de Pablos B."/>
            <person name="Perez-Diaz J.-C."/>
            <person name="Purcell R."/>
            <person name="Remmel B."/>
            <person name="Rose M."/>
            <person name="Schlueter T."/>
            <person name="Simoes N."/>
            <person name="Tierrez A."/>
            <person name="Vazquez-Boland J.-A."/>
            <person name="Voss H."/>
            <person name="Wehland J."/>
            <person name="Cossart P."/>
        </authorList>
    </citation>
    <scope>NUCLEOTIDE SEQUENCE [LARGE SCALE GENOMIC DNA]</scope>
    <source>
        <strain>ATCC BAA-680 / CLIP 11262</strain>
    </source>
</reference>
<proteinExistence type="inferred from homology"/>
<accession>Q92A53</accession>